<protein>
    <recommendedName>
        <fullName evidence="1">Probable septum site-determining protein MinC</fullName>
    </recommendedName>
</protein>
<proteinExistence type="inferred from homology"/>
<keyword id="KW-0131">Cell cycle</keyword>
<keyword id="KW-0132">Cell division</keyword>
<keyword id="KW-0717">Septation</keyword>
<accession>Q8YBH3</accession>
<reference key="1">
    <citation type="journal article" date="2002" name="Proc. Natl. Acad. Sci. U.S.A.">
        <title>The genome sequence of the facultative intracellular pathogen Brucella melitensis.</title>
        <authorList>
            <person name="DelVecchio V.G."/>
            <person name="Kapatral V."/>
            <person name="Redkar R.J."/>
            <person name="Patra G."/>
            <person name="Mujer C."/>
            <person name="Los T."/>
            <person name="Ivanova N."/>
            <person name="Anderson I."/>
            <person name="Bhattacharyya A."/>
            <person name="Lykidis A."/>
            <person name="Reznik G."/>
            <person name="Jablonski L."/>
            <person name="Larsen N."/>
            <person name="D'Souza M."/>
            <person name="Bernal A."/>
            <person name="Mazur M."/>
            <person name="Goltsman E."/>
            <person name="Selkov E."/>
            <person name="Elzer P.H."/>
            <person name="Hagius S."/>
            <person name="O'Callaghan D."/>
            <person name="Letesson J.-J."/>
            <person name="Haselkorn R."/>
            <person name="Kyrpides N.C."/>
            <person name="Overbeek R."/>
        </authorList>
    </citation>
    <scope>NUCLEOTIDE SEQUENCE [LARGE SCALE GENOMIC DNA]</scope>
    <source>
        <strain>ATCC 23456 / CCUG 17765 / NCTC 10094 / 16M</strain>
    </source>
</reference>
<comment type="function">
    <text evidence="1">Cell division inhibitor that blocks the formation of polar Z ring septums. Rapidly oscillates between the poles of the cell to destabilize FtsZ filaments that have formed before they mature into polar Z rings. Prevents FtsZ polymerization.</text>
</comment>
<comment type="subunit">
    <text evidence="1">Interacts with MinD and FtsZ.</text>
</comment>
<comment type="similarity">
    <text evidence="1">Belongs to the MinC family.</text>
</comment>
<comment type="sequence caution" evidence="3">
    <conflict type="erroneous initiation">
        <sequence resource="EMBL-CDS" id="AAL54169"/>
    </conflict>
</comment>
<gene>
    <name evidence="1" type="primary">minC</name>
    <name type="ordered locus">BMEII0927</name>
</gene>
<evidence type="ECO:0000255" key="1">
    <source>
        <dbReference type="HAMAP-Rule" id="MF_00267"/>
    </source>
</evidence>
<evidence type="ECO:0000256" key="2">
    <source>
        <dbReference type="SAM" id="MobiDB-lite"/>
    </source>
</evidence>
<evidence type="ECO:0000305" key="3"/>
<organism>
    <name type="scientific">Brucella melitensis biotype 1 (strain ATCC 23456 / CCUG 17765 / NCTC 10094 / 16M)</name>
    <dbReference type="NCBI Taxonomy" id="224914"/>
    <lineage>
        <taxon>Bacteria</taxon>
        <taxon>Pseudomonadati</taxon>
        <taxon>Pseudomonadota</taxon>
        <taxon>Alphaproteobacteria</taxon>
        <taxon>Hyphomicrobiales</taxon>
        <taxon>Brucellaceae</taxon>
        <taxon>Brucella/Ochrobactrum group</taxon>
        <taxon>Brucella</taxon>
    </lineage>
</organism>
<name>MINC_BRUME</name>
<sequence length="248" mass="26589">MNQVLTETRPIRLKGRSFLAMVLSPELPLDGWLERLDDLARRSSGFFLGRPVVLDMENLAIERAQLVYLLQALNDRGVWIMGVEGARPSLLGPGMPPAMRGGQPAADFEAPAGEPQANPGAPEPQISQAVRAPGHAVHAMPSMVITEPVRSGQSVYFPEGDVTIVGSVASGAEVVAGGSIHIYGTLRGRALAGTAGNTSARIFCRKLEAELVAIDGLYKTAEDLEPRFRGQAVQLWLDGDYMMIDTLS</sequence>
<dbReference type="EMBL" id="AE008918">
    <property type="protein sequence ID" value="AAL54169.1"/>
    <property type="status" value="ALT_INIT"/>
    <property type="molecule type" value="Genomic_DNA"/>
</dbReference>
<dbReference type="PIR" id="AF3625">
    <property type="entry name" value="AF3625"/>
</dbReference>
<dbReference type="RefSeq" id="WP_002966269.1">
    <property type="nucleotide sequence ID" value="NZ_GG703779.1"/>
</dbReference>
<dbReference type="SMR" id="Q8YBH3"/>
<dbReference type="GeneID" id="97535516"/>
<dbReference type="KEGG" id="bme:BMEII0927"/>
<dbReference type="KEGG" id="bmel:DK63_2324"/>
<dbReference type="PATRIC" id="fig|224914.52.peg.2435"/>
<dbReference type="eggNOG" id="COG0850">
    <property type="taxonomic scope" value="Bacteria"/>
</dbReference>
<dbReference type="Proteomes" id="UP000000419">
    <property type="component" value="Chromosome II"/>
</dbReference>
<dbReference type="GO" id="GO:0000902">
    <property type="term" value="P:cell morphogenesis"/>
    <property type="evidence" value="ECO:0007669"/>
    <property type="project" value="InterPro"/>
</dbReference>
<dbReference type="GO" id="GO:0000917">
    <property type="term" value="P:division septum assembly"/>
    <property type="evidence" value="ECO:0007669"/>
    <property type="project" value="UniProtKB-KW"/>
</dbReference>
<dbReference type="GO" id="GO:1901891">
    <property type="term" value="P:regulation of cell septum assembly"/>
    <property type="evidence" value="ECO:0007669"/>
    <property type="project" value="InterPro"/>
</dbReference>
<dbReference type="Gene3D" id="2.160.20.70">
    <property type="match status" value="1"/>
</dbReference>
<dbReference type="Gene3D" id="3.30.70.260">
    <property type="match status" value="1"/>
</dbReference>
<dbReference type="HAMAP" id="MF_00267">
    <property type="entry name" value="MinC"/>
    <property type="match status" value="1"/>
</dbReference>
<dbReference type="InterPro" id="IPR016098">
    <property type="entry name" value="CAP/MinC_C"/>
</dbReference>
<dbReference type="InterPro" id="IPR013033">
    <property type="entry name" value="MinC"/>
</dbReference>
<dbReference type="InterPro" id="IPR036145">
    <property type="entry name" value="MinC_C_sf"/>
</dbReference>
<dbReference type="InterPro" id="IPR005526">
    <property type="entry name" value="Septum_form_inhib_MinC_C"/>
</dbReference>
<dbReference type="NCBIfam" id="TIGR01222">
    <property type="entry name" value="minC"/>
    <property type="match status" value="1"/>
</dbReference>
<dbReference type="PANTHER" id="PTHR34108">
    <property type="entry name" value="SEPTUM SITE-DETERMINING PROTEIN MINC"/>
    <property type="match status" value="1"/>
</dbReference>
<dbReference type="PANTHER" id="PTHR34108:SF1">
    <property type="entry name" value="SEPTUM SITE-DETERMINING PROTEIN MINC"/>
    <property type="match status" value="1"/>
</dbReference>
<dbReference type="Pfam" id="PF03775">
    <property type="entry name" value="MinC_C"/>
    <property type="match status" value="1"/>
</dbReference>
<dbReference type="SUPFAM" id="SSF63848">
    <property type="entry name" value="Cell-division inhibitor MinC, C-terminal domain"/>
    <property type="match status" value="1"/>
</dbReference>
<feature type="chain" id="PRO_0000189022" description="Probable septum site-determining protein MinC">
    <location>
        <begin position="1"/>
        <end position="248"/>
    </location>
</feature>
<feature type="region of interest" description="Disordered" evidence="2">
    <location>
        <begin position="94"/>
        <end position="125"/>
    </location>
</feature>